<organism>
    <name type="scientific">Neisseria gonorrhoeae (strain NCCP11945)</name>
    <dbReference type="NCBI Taxonomy" id="521006"/>
    <lineage>
        <taxon>Bacteria</taxon>
        <taxon>Pseudomonadati</taxon>
        <taxon>Pseudomonadota</taxon>
        <taxon>Betaproteobacteria</taxon>
        <taxon>Neisseriales</taxon>
        <taxon>Neisseriaceae</taxon>
        <taxon>Neisseria</taxon>
    </lineage>
</organism>
<comment type="function">
    <text evidence="1">Catalyzes the hydrolysis of N-succinyl-L,L-diaminopimelic acid (SDAP), forming succinate and LL-2,6-diaminopimelate (DAP), an intermediate involved in the bacterial biosynthesis of lysine and meso-diaminopimelic acid, an essential component of bacterial cell walls.</text>
</comment>
<comment type="catalytic activity">
    <reaction evidence="1">
        <text>N-succinyl-(2S,6S)-2,6-diaminopimelate + H2O = (2S,6S)-2,6-diaminopimelate + succinate</text>
        <dbReference type="Rhea" id="RHEA:22608"/>
        <dbReference type="ChEBI" id="CHEBI:15377"/>
        <dbReference type="ChEBI" id="CHEBI:30031"/>
        <dbReference type="ChEBI" id="CHEBI:57609"/>
        <dbReference type="ChEBI" id="CHEBI:58087"/>
        <dbReference type="EC" id="3.5.1.18"/>
    </reaction>
</comment>
<comment type="cofactor">
    <cofactor evidence="1">
        <name>Zn(2+)</name>
        <dbReference type="ChEBI" id="CHEBI:29105"/>
    </cofactor>
    <cofactor evidence="1">
        <name>Co(2+)</name>
        <dbReference type="ChEBI" id="CHEBI:48828"/>
    </cofactor>
    <text evidence="1">Binds 2 Zn(2+) or Co(2+) ions per subunit.</text>
</comment>
<comment type="pathway">
    <text evidence="1">Amino-acid biosynthesis; L-lysine biosynthesis via DAP pathway; LL-2,6-diaminopimelate from (S)-tetrahydrodipicolinate (succinylase route): step 3/3.</text>
</comment>
<comment type="subunit">
    <text evidence="1">Homodimer.</text>
</comment>
<comment type="similarity">
    <text evidence="1">Belongs to the peptidase M20A family. DapE subfamily.</text>
</comment>
<comment type="sequence caution" evidence="2">
    <conflict type="erroneous initiation">
        <sequence resource="EMBL-CDS" id="ACF29479"/>
    </conflict>
</comment>
<keyword id="KW-0028">Amino-acid biosynthesis</keyword>
<keyword id="KW-0170">Cobalt</keyword>
<keyword id="KW-0220">Diaminopimelate biosynthesis</keyword>
<keyword id="KW-0378">Hydrolase</keyword>
<keyword id="KW-0457">Lysine biosynthesis</keyword>
<keyword id="KW-0479">Metal-binding</keyword>
<keyword id="KW-0862">Zinc</keyword>
<sequence length="381" mass="41468">MTETQSLELAKALISRPSVTPDDRDCQKLLAERLHKIGFAAEELHFGDTKNIWLRRGTKAPVVCFAGHTDVVPTGPVEKWDSPPFEPTERDGRLYGRGAADMKTSIACFVTACERFVAEHPDHQGSIALLITSDEEGDALDGTTKVVDVLKARGELIDYCIVGEPTAVDKLGDMIKNGRRGSLSGNLTVKGKQGHIAYPHLAVNPVHTFAPALLELTQEVWDEGNEYFPPTSFQISNINGGTGATNVIPGELNVKFNFRFSTESTETGLKQRVHAILDKHGVQYDLQWSCSGQPFLTHAGKLTDVARTAIAETCGVEAELSTTGGTSDGRFIKAIAKELIELGPSNATIHQINENVRLDDIPKLSAVYERILARLLAEKAV</sequence>
<name>DAPE_NEIG2</name>
<accession>B4RKY8</accession>
<proteinExistence type="inferred from homology"/>
<feature type="chain" id="PRO_0000375622" description="Succinyl-diaminopimelate desuccinylase">
    <location>
        <begin position="1"/>
        <end position="381"/>
    </location>
</feature>
<feature type="active site" evidence="1">
    <location>
        <position position="70"/>
    </location>
</feature>
<feature type="active site" description="Proton acceptor" evidence="1">
    <location>
        <position position="135"/>
    </location>
</feature>
<feature type="binding site" evidence="1">
    <location>
        <position position="68"/>
    </location>
    <ligand>
        <name>Zn(2+)</name>
        <dbReference type="ChEBI" id="CHEBI:29105"/>
        <label>1</label>
    </ligand>
</feature>
<feature type="binding site" evidence="1">
    <location>
        <position position="101"/>
    </location>
    <ligand>
        <name>Zn(2+)</name>
        <dbReference type="ChEBI" id="CHEBI:29105"/>
        <label>1</label>
    </ligand>
</feature>
<feature type="binding site" evidence="1">
    <location>
        <position position="101"/>
    </location>
    <ligand>
        <name>Zn(2+)</name>
        <dbReference type="ChEBI" id="CHEBI:29105"/>
        <label>2</label>
    </ligand>
</feature>
<feature type="binding site" evidence="1">
    <location>
        <position position="136"/>
    </location>
    <ligand>
        <name>Zn(2+)</name>
        <dbReference type="ChEBI" id="CHEBI:29105"/>
        <label>2</label>
    </ligand>
</feature>
<feature type="binding site" evidence="1">
    <location>
        <position position="164"/>
    </location>
    <ligand>
        <name>Zn(2+)</name>
        <dbReference type="ChEBI" id="CHEBI:29105"/>
        <label>1</label>
    </ligand>
</feature>
<feature type="binding site" evidence="1">
    <location>
        <position position="350"/>
    </location>
    <ligand>
        <name>Zn(2+)</name>
        <dbReference type="ChEBI" id="CHEBI:29105"/>
        <label>2</label>
    </ligand>
</feature>
<gene>
    <name evidence="1" type="primary">dapE</name>
    <name type="ordered locus">NGK_0798</name>
</gene>
<protein>
    <recommendedName>
        <fullName evidence="1">Succinyl-diaminopimelate desuccinylase</fullName>
        <shortName evidence="1">SDAP desuccinylase</shortName>
        <ecNumber evidence="1">3.5.1.18</ecNumber>
    </recommendedName>
    <alternativeName>
        <fullName evidence="1">N-succinyl-LL-2,6-diaminoheptanedioate amidohydrolase</fullName>
    </alternativeName>
</protein>
<reference key="1">
    <citation type="journal article" date="2008" name="J. Bacteriol.">
        <title>Complete genome sequence of Neisseria gonorrhoeae NCCP11945.</title>
        <authorList>
            <person name="Chung G.T."/>
            <person name="Yoo J.S."/>
            <person name="Oh H.B."/>
            <person name="Lee Y.S."/>
            <person name="Cha S.H."/>
            <person name="Kim S.J."/>
            <person name="Yoo C.K."/>
        </authorList>
    </citation>
    <scope>NUCLEOTIDE SEQUENCE [LARGE SCALE GENOMIC DNA]</scope>
    <source>
        <strain>NCCP11945</strain>
    </source>
</reference>
<evidence type="ECO:0000255" key="1">
    <source>
        <dbReference type="HAMAP-Rule" id="MF_01690"/>
    </source>
</evidence>
<evidence type="ECO:0000305" key="2"/>
<dbReference type="EC" id="3.5.1.18" evidence="1"/>
<dbReference type="EMBL" id="CP001050">
    <property type="protein sequence ID" value="ACF29479.1"/>
    <property type="status" value="ALT_INIT"/>
    <property type="molecule type" value="Genomic_DNA"/>
</dbReference>
<dbReference type="RefSeq" id="WP_003691026.1">
    <property type="nucleotide sequence ID" value="NC_011035.1"/>
</dbReference>
<dbReference type="SMR" id="B4RKY8"/>
<dbReference type="GeneID" id="66753313"/>
<dbReference type="KEGG" id="ngk:NGK_0798"/>
<dbReference type="HOGENOM" id="CLU_021802_4_0_4"/>
<dbReference type="UniPathway" id="UPA00034">
    <property type="reaction ID" value="UER00021"/>
</dbReference>
<dbReference type="Proteomes" id="UP000002564">
    <property type="component" value="Chromosome"/>
</dbReference>
<dbReference type="GO" id="GO:0008777">
    <property type="term" value="F:acetylornithine deacetylase activity"/>
    <property type="evidence" value="ECO:0007669"/>
    <property type="project" value="TreeGrafter"/>
</dbReference>
<dbReference type="GO" id="GO:0050897">
    <property type="term" value="F:cobalt ion binding"/>
    <property type="evidence" value="ECO:0007669"/>
    <property type="project" value="UniProtKB-UniRule"/>
</dbReference>
<dbReference type="GO" id="GO:0009014">
    <property type="term" value="F:succinyl-diaminopimelate desuccinylase activity"/>
    <property type="evidence" value="ECO:0007669"/>
    <property type="project" value="UniProtKB-UniRule"/>
</dbReference>
<dbReference type="GO" id="GO:0008270">
    <property type="term" value="F:zinc ion binding"/>
    <property type="evidence" value="ECO:0007669"/>
    <property type="project" value="UniProtKB-UniRule"/>
</dbReference>
<dbReference type="GO" id="GO:0019877">
    <property type="term" value="P:diaminopimelate biosynthetic process"/>
    <property type="evidence" value="ECO:0007669"/>
    <property type="project" value="UniProtKB-UniRule"/>
</dbReference>
<dbReference type="GO" id="GO:0006526">
    <property type="term" value="P:L-arginine biosynthetic process"/>
    <property type="evidence" value="ECO:0007669"/>
    <property type="project" value="TreeGrafter"/>
</dbReference>
<dbReference type="GO" id="GO:0009089">
    <property type="term" value="P:lysine biosynthetic process via diaminopimelate"/>
    <property type="evidence" value="ECO:0007669"/>
    <property type="project" value="UniProtKB-UniRule"/>
</dbReference>
<dbReference type="CDD" id="cd03891">
    <property type="entry name" value="M20_DapE_proteobac"/>
    <property type="match status" value="1"/>
</dbReference>
<dbReference type="FunFam" id="3.30.70.360:FF:000011">
    <property type="entry name" value="Succinyl-diaminopimelate desuccinylase"/>
    <property type="match status" value="1"/>
</dbReference>
<dbReference type="FunFam" id="3.40.630.10:FF:000005">
    <property type="entry name" value="Succinyl-diaminopimelate desuccinylase"/>
    <property type="match status" value="1"/>
</dbReference>
<dbReference type="FunFam" id="3.40.630.10:FF:000010">
    <property type="entry name" value="Succinyl-diaminopimelate desuccinylase"/>
    <property type="match status" value="1"/>
</dbReference>
<dbReference type="Gene3D" id="3.40.630.10">
    <property type="entry name" value="Zn peptidases"/>
    <property type="match status" value="2"/>
</dbReference>
<dbReference type="HAMAP" id="MF_01690">
    <property type="entry name" value="DapE"/>
    <property type="match status" value="1"/>
</dbReference>
<dbReference type="InterPro" id="IPR036264">
    <property type="entry name" value="Bact_exopeptidase_dim_dom"/>
</dbReference>
<dbReference type="InterPro" id="IPR005941">
    <property type="entry name" value="DapE_proteobac"/>
</dbReference>
<dbReference type="InterPro" id="IPR002933">
    <property type="entry name" value="Peptidase_M20"/>
</dbReference>
<dbReference type="InterPro" id="IPR011650">
    <property type="entry name" value="Peptidase_M20_dimer"/>
</dbReference>
<dbReference type="InterPro" id="IPR050072">
    <property type="entry name" value="Peptidase_M20A"/>
</dbReference>
<dbReference type="NCBIfam" id="TIGR01246">
    <property type="entry name" value="dapE_proteo"/>
    <property type="match status" value="1"/>
</dbReference>
<dbReference type="NCBIfam" id="NF009557">
    <property type="entry name" value="PRK13009.1"/>
    <property type="match status" value="1"/>
</dbReference>
<dbReference type="PANTHER" id="PTHR43808">
    <property type="entry name" value="ACETYLORNITHINE DEACETYLASE"/>
    <property type="match status" value="1"/>
</dbReference>
<dbReference type="PANTHER" id="PTHR43808:SF31">
    <property type="entry name" value="N-ACETYL-L-CITRULLINE DEACETYLASE"/>
    <property type="match status" value="1"/>
</dbReference>
<dbReference type="Pfam" id="PF07687">
    <property type="entry name" value="M20_dimer"/>
    <property type="match status" value="1"/>
</dbReference>
<dbReference type="Pfam" id="PF01546">
    <property type="entry name" value="Peptidase_M20"/>
    <property type="match status" value="1"/>
</dbReference>
<dbReference type="SUPFAM" id="SSF55031">
    <property type="entry name" value="Bacterial exopeptidase dimerisation domain"/>
    <property type="match status" value="1"/>
</dbReference>
<dbReference type="SUPFAM" id="SSF53187">
    <property type="entry name" value="Zn-dependent exopeptidases"/>
    <property type="match status" value="1"/>
</dbReference>